<evidence type="ECO:0000250" key="1"/>
<evidence type="ECO:0000250" key="2">
    <source>
        <dbReference type="UniProtKB" id="P97326"/>
    </source>
</evidence>
<evidence type="ECO:0000255" key="3"/>
<evidence type="ECO:0000255" key="4">
    <source>
        <dbReference type="PROSITE-ProRule" id="PRU00043"/>
    </source>
</evidence>
<evidence type="ECO:0000256" key="5">
    <source>
        <dbReference type="SAM" id="MobiDB-lite"/>
    </source>
</evidence>
<evidence type="ECO:0000305" key="6"/>
<keyword id="KW-0106">Calcium</keyword>
<keyword id="KW-0130">Cell adhesion</keyword>
<keyword id="KW-1003">Cell membrane</keyword>
<keyword id="KW-0165">Cleavage on pair of basic residues</keyword>
<keyword id="KW-0325">Glycoprotein</keyword>
<keyword id="KW-0472">Membrane</keyword>
<keyword id="KW-0479">Metal-binding</keyword>
<keyword id="KW-0597">Phosphoprotein</keyword>
<keyword id="KW-1185">Reference proteome</keyword>
<keyword id="KW-0677">Repeat</keyword>
<keyword id="KW-0732">Signal</keyword>
<keyword id="KW-0812">Transmembrane</keyword>
<keyword id="KW-1133">Transmembrane helix</keyword>
<reference key="1">
    <citation type="submission" date="2005-09" db="EMBL/GenBank/DDBJ databases">
        <authorList>
            <consortium name="NIH - Mammalian Gene Collection (MGC) project"/>
        </authorList>
    </citation>
    <scope>NUCLEOTIDE SEQUENCE [LARGE SCALE MRNA]</scope>
    <source>
        <strain>Hereford</strain>
        <tissue>Uterus</tissue>
    </source>
</reference>
<accession>Q3SWX5</accession>
<protein>
    <recommendedName>
        <fullName>Cadherin-6</fullName>
    </recommendedName>
</protein>
<feature type="signal peptide" evidence="3">
    <location>
        <begin position="1"/>
        <end position="18"/>
    </location>
</feature>
<feature type="propeptide" id="PRO_0000285118" evidence="3">
    <location>
        <begin position="19"/>
        <end position="53"/>
    </location>
</feature>
<feature type="chain" id="PRO_0000285119" description="Cadherin-6">
    <location>
        <begin position="54"/>
        <end position="790"/>
    </location>
</feature>
<feature type="topological domain" description="Extracellular" evidence="3">
    <location>
        <begin position="54"/>
        <end position="615"/>
    </location>
</feature>
<feature type="transmembrane region" description="Helical" evidence="3">
    <location>
        <begin position="616"/>
        <end position="636"/>
    </location>
</feature>
<feature type="topological domain" description="Cytoplasmic" evidence="3">
    <location>
        <begin position="637"/>
        <end position="790"/>
    </location>
</feature>
<feature type="domain" description="Cadherin 1" evidence="4">
    <location>
        <begin position="54"/>
        <end position="159"/>
    </location>
</feature>
<feature type="domain" description="Cadherin 2" evidence="4">
    <location>
        <begin position="160"/>
        <end position="268"/>
    </location>
</feature>
<feature type="domain" description="Cadherin 3" evidence="4">
    <location>
        <begin position="269"/>
        <end position="383"/>
    </location>
</feature>
<feature type="domain" description="Cadherin 4" evidence="4">
    <location>
        <begin position="384"/>
        <end position="486"/>
    </location>
</feature>
<feature type="domain" description="Cadherin 5" evidence="4">
    <location>
        <begin position="487"/>
        <end position="608"/>
    </location>
</feature>
<feature type="region of interest" description="Disordered" evidence="5">
    <location>
        <begin position="261"/>
        <end position="291"/>
    </location>
</feature>
<feature type="compositionally biased region" description="Polar residues" evidence="5">
    <location>
        <begin position="269"/>
        <end position="279"/>
    </location>
</feature>
<feature type="modified residue" description="Phosphoserine" evidence="2">
    <location>
        <position position="786"/>
    </location>
</feature>
<feature type="modified residue" description="Phosphoserine" evidence="2">
    <location>
        <position position="790"/>
    </location>
</feature>
<feature type="glycosylation site" description="N-linked (GlcNAc...) asparagine" evidence="3">
    <location>
        <position position="255"/>
    </location>
</feature>
<feature type="glycosylation site" description="N-linked (GlcNAc...) asparagine" evidence="3">
    <location>
        <position position="399"/>
    </location>
</feature>
<feature type="glycosylation site" description="N-linked (GlcNAc...) asparagine" evidence="3">
    <location>
        <position position="437"/>
    </location>
</feature>
<feature type="glycosylation site" description="N-linked (GlcNAc...) asparagine" evidence="3">
    <location>
        <position position="455"/>
    </location>
</feature>
<feature type="glycosylation site" description="N-linked (GlcNAc...) asparagine" evidence="3">
    <location>
        <position position="536"/>
    </location>
</feature>
<name>CADH6_BOVIN</name>
<gene>
    <name type="primary">CDH6</name>
</gene>
<comment type="function">
    <text evidence="1">Cadherins are calcium-dependent cell adhesion proteins. They preferentially interact with themselves in a homophilic manner in connecting cells; cadherins may thus contribute to the sorting of heterogeneous cell types (By similarity).</text>
</comment>
<comment type="subcellular location">
    <subcellularLocation>
        <location evidence="6">Cell membrane</location>
        <topology evidence="6">Single-pass type I membrane protein</topology>
    </subcellularLocation>
</comment>
<comment type="domain">
    <text evidence="1">Three calcium ions are usually bound at the interface of each cadherin domain and rigidify the connections, imparting a strong curvature to the full-length ectodomain.</text>
</comment>
<organism>
    <name type="scientific">Bos taurus</name>
    <name type="common">Bovine</name>
    <dbReference type="NCBI Taxonomy" id="9913"/>
    <lineage>
        <taxon>Eukaryota</taxon>
        <taxon>Metazoa</taxon>
        <taxon>Chordata</taxon>
        <taxon>Craniata</taxon>
        <taxon>Vertebrata</taxon>
        <taxon>Euteleostomi</taxon>
        <taxon>Mammalia</taxon>
        <taxon>Eutheria</taxon>
        <taxon>Laurasiatheria</taxon>
        <taxon>Artiodactyla</taxon>
        <taxon>Ruminantia</taxon>
        <taxon>Pecora</taxon>
        <taxon>Bovidae</taxon>
        <taxon>Bovinae</taxon>
        <taxon>Bos</taxon>
    </lineage>
</organism>
<sequence length="790" mass="88309">MRTYRYFLLLFWVGQPYPTFSTPLSKRTSGFPAKKRTLELSGNSKNELSRSKRSWMWNQFFLLEEYTGSDYQYVGKLHSDQDRGDGSLKYILSGDGAGDLFIINENTGDIQATKRLDREEKPVYILRAQAINRKTGRPVEPESEFIIKIHDINDNEPIFTKEVYTATVPEMSDVGTFVVQVTATDADDPTYGNSAKVVYSILQGQPYFSVESETGIIKTALLNMDRENREQYQVVIQAKDMGGQMGGLSGTTTVNITLTDVNDNPPRFPQSTYQFKTPESSPPGTPIGRIKASDADVGENAEIEYSITEGEGLDMFDVITDQETQEGIITVKKLLDFEKKKVYTLKVEASNPHVEPRFLYLGPFKDSATVRIMVEDVDEPPVFSKLAYILQIREDAQINTTIGSVTAQDPDAARNPVKYSVDRHTDMDRIFNIDSGNGSIFTSKLLDRETLLWHNITVIATEINNPKQSSRVPLYIKVLDVNDNPPEFAEFYETFVCEKAKADQLIQTLRAIDKDDPYSGHQFSFSLAPEAASGSNFTIQDNKDNTAGIFTRKNGYNRHEMSTYLLPVVISDNDYPVQSSTGTVTVRVCACDHQGNMQSCHAEALVHPTGLSTGALIAILLCIVTLLVTVVLFAALRRQRKKEPLIISKEDIRDNIVSYNDEGGGEEDTQAFDIGTLRNPEAIEDSKLRRDIVPEALFLPRRTPAARDNTDVRDFINQRLKENDTDPTAPPYDSLATYAYEGAGSVADSLSSLESVTTDGDQDYDYLSDWGPRFKKLADMYGGVDSDKDS</sequence>
<proteinExistence type="evidence at transcript level"/>
<dbReference type="EMBL" id="BC104618">
    <property type="protein sequence ID" value="AAI04619.1"/>
    <property type="molecule type" value="mRNA"/>
</dbReference>
<dbReference type="RefSeq" id="NP_001029812.1">
    <property type="nucleotide sequence ID" value="NM_001034640.2"/>
</dbReference>
<dbReference type="RefSeq" id="XP_010815116.1">
    <property type="nucleotide sequence ID" value="XM_010816814.4"/>
</dbReference>
<dbReference type="SMR" id="Q3SWX5"/>
<dbReference type="FunCoup" id="Q3SWX5">
    <property type="interactions" value="273"/>
</dbReference>
<dbReference type="STRING" id="9913.ENSBTAP00000017274"/>
<dbReference type="GlyCosmos" id="Q3SWX5">
    <property type="glycosylation" value="5 sites, No reported glycans"/>
</dbReference>
<dbReference type="GlyGen" id="Q3SWX5">
    <property type="glycosylation" value="5 sites"/>
</dbReference>
<dbReference type="PaxDb" id="9913-ENSBTAP00000017274"/>
<dbReference type="Ensembl" id="ENSBTAT00000017274.5">
    <property type="protein sequence ID" value="ENSBTAP00000017274.4"/>
    <property type="gene ID" value="ENSBTAG00000012992.7"/>
</dbReference>
<dbReference type="GeneID" id="537946"/>
<dbReference type="KEGG" id="bta:537946"/>
<dbReference type="CTD" id="1004"/>
<dbReference type="VEuPathDB" id="HostDB:ENSBTAG00000012992"/>
<dbReference type="VGNC" id="VGNC:27105">
    <property type="gene designation" value="CDH6"/>
</dbReference>
<dbReference type="eggNOG" id="KOG3594">
    <property type="taxonomic scope" value="Eukaryota"/>
</dbReference>
<dbReference type="GeneTree" id="ENSGT00940000154673"/>
<dbReference type="HOGENOM" id="CLU_005284_3_1_1"/>
<dbReference type="InParanoid" id="Q3SWX5"/>
<dbReference type="OMA" id="RQDLHRS"/>
<dbReference type="OrthoDB" id="6252479at2759"/>
<dbReference type="TreeFam" id="TF329887"/>
<dbReference type="Reactome" id="R-BTA-418990">
    <property type="pathway name" value="Adherens junctions interactions"/>
</dbReference>
<dbReference type="Proteomes" id="UP000009136">
    <property type="component" value="Chromosome 20"/>
</dbReference>
<dbReference type="Bgee" id="ENSBTAG00000012992">
    <property type="expression patterns" value="Expressed in adult mammalian kidney and 85 other cell types or tissues"/>
</dbReference>
<dbReference type="GO" id="GO:0005912">
    <property type="term" value="C:adherens junction"/>
    <property type="evidence" value="ECO:0000318"/>
    <property type="project" value="GO_Central"/>
</dbReference>
<dbReference type="GO" id="GO:0016342">
    <property type="term" value="C:catenin complex"/>
    <property type="evidence" value="ECO:0000318"/>
    <property type="project" value="GO_Central"/>
</dbReference>
<dbReference type="GO" id="GO:0098978">
    <property type="term" value="C:glutamatergic synapse"/>
    <property type="evidence" value="ECO:0007669"/>
    <property type="project" value="Ensembl"/>
</dbReference>
<dbReference type="GO" id="GO:0005654">
    <property type="term" value="C:nucleoplasm"/>
    <property type="evidence" value="ECO:0007669"/>
    <property type="project" value="Ensembl"/>
</dbReference>
<dbReference type="GO" id="GO:0008013">
    <property type="term" value="F:beta-catenin binding"/>
    <property type="evidence" value="ECO:0000318"/>
    <property type="project" value="GO_Central"/>
</dbReference>
<dbReference type="GO" id="GO:0045296">
    <property type="term" value="F:cadherin binding"/>
    <property type="evidence" value="ECO:0000318"/>
    <property type="project" value="GO_Central"/>
</dbReference>
<dbReference type="GO" id="GO:0005509">
    <property type="term" value="F:calcium ion binding"/>
    <property type="evidence" value="ECO:0007669"/>
    <property type="project" value="InterPro"/>
</dbReference>
<dbReference type="GO" id="GO:0034332">
    <property type="term" value="P:adherens junction organization"/>
    <property type="evidence" value="ECO:0000318"/>
    <property type="project" value="GO_Central"/>
</dbReference>
<dbReference type="GO" id="GO:0016339">
    <property type="term" value="P:calcium-dependent cell-cell adhesion via plasma membrane cell adhesion molecules"/>
    <property type="evidence" value="ECO:0000318"/>
    <property type="project" value="GO_Central"/>
</dbReference>
<dbReference type="GO" id="GO:0016477">
    <property type="term" value="P:cell migration"/>
    <property type="evidence" value="ECO:0000318"/>
    <property type="project" value="GO_Central"/>
</dbReference>
<dbReference type="GO" id="GO:0000902">
    <property type="term" value="P:cell morphogenesis"/>
    <property type="evidence" value="ECO:0000318"/>
    <property type="project" value="GO_Central"/>
</dbReference>
<dbReference type="GO" id="GO:0044331">
    <property type="term" value="P:cell-cell adhesion mediated by cadherin"/>
    <property type="evidence" value="ECO:0000318"/>
    <property type="project" value="GO_Central"/>
</dbReference>
<dbReference type="GO" id="GO:0007043">
    <property type="term" value="P:cell-cell junction assembly"/>
    <property type="evidence" value="ECO:0000318"/>
    <property type="project" value="GO_Central"/>
</dbReference>
<dbReference type="GO" id="GO:0007156">
    <property type="term" value="P:homophilic cell adhesion via plasma membrane adhesion molecules"/>
    <property type="evidence" value="ECO:0007669"/>
    <property type="project" value="InterPro"/>
</dbReference>
<dbReference type="GO" id="GO:0007219">
    <property type="term" value="P:Notch signaling pathway"/>
    <property type="evidence" value="ECO:0007669"/>
    <property type="project" value="Ensembl"/>
</dbReference>
<dbReference type="GO" id="GO:0099560">
    <property type="term" value="P:synaptic membrane adhesion"/>
    <property type="evidence" value="ECO:0000318"/>
    <property type="project" value="GO_Central"/>
</dbReference>
<dbReference type="CDD" id="cd11304">
    <property type="entry name" value="Cadherin_repeat"/>
    <property type="match status" value="5"/>
</dbReference>
<dbReference type="FunFam" id="2.60.40.60:FF:000297">
    <property type="entry name" value="Cadherin 12"/>
    <property type="match status" value="1"/>
</dbReference>
<dbReference type="FunFam" id="2.60.40.60:FF:000009">
    <property type="entry name" value="Cadherin 24"/>
    <property type="match status" value="1"/>
</dbReference>
<dbReference type="FunFam" id="2.60.40.60:FF:000012">
    <property type="entry name" value="Cadherin 24"/>
    <property type="match status" value="1"/>
</dbReference>
<dbReference type="FunFam" id="2.60.40.60:FF:000017">
    <property type="entry name" value="Cadherin 24"/>
    <property type="match status" value="1"/>
</dbReference>
<dbReference type="FunFam" id="2.60.40.60:FF:000014">
    <property type="entry name" value="Cadherin 8"/>
    <property type="match status" value="1"/>
</dbReference>
<dbReference type="FunFam" id="4.10.900.10:FF:000006">
    <property type="entry name" value="Cadherin-9 preproprotein"/>
    <property type="match status" value="1"/>
</dbReference>
<dbReference type="Gene3D" id="2.60.40.60">
    <property type="entry name" value="Cadherins"/>
    <property type="match status" value="5"/>
</dbReference>
<dbReference type="Gene3D" id="4.10.900.10">
    <property type="entry name" value="TCF3-CBD (Catenin binding domain)"/>
    <property type="match status" value="1"/>
</dbReference>
<dbReference type="InterPro" id="IPR039808">
    <property type="entry name" value="Cadherin"/>
</dbReference>
<dbReference type="InterPro" id="IPR002126">
    <property type="entry name" value="Cadherin-like_dom"/>
</dbReference>
<dbReference type="InterPro" id="IPR015919">
    <property type="entry name" value="Cadherin-like_sf"/>
</dbReference>
<dbReference type="InterPro" id="IPR020894">
    <property type="entry name" value="Cadherin_CS"/>
</dbReference>
<dbReference type="InterPro" id="IPR000233">
    <property type="entry name" value="Cadherin_Y-type_LIR"/>
</dbReference>
<dbReference type="InterPro" id="IPR027397">
    <property type="entry name" value="Catenin-bd_sf"/>
</dbReference>
<dbReference type="PANTHER" id="PTHR24027">
    <property type="entry name" value="CADHERIN-23"/>
    <property type="match status" value="1"/>
</dbReference>
<dbReference type="PANTHER" id="PTHR24027:SF322">
    <property type="entry name" value="CADHERIN-6"/>
    <property type="match status" value="1"/>
</dbReference>
<dbReference type="Pfam" id="PF01049">
    <property type="entry name" value="CADH_Y-type_LIR"/>
    <property type="match status" value="1"/>
</dbReference>
<dbReference type="Pfam" id="PF00028">
    <property type="entry name" value="Cadherin"/>
    <property type="match status" value="5"/>
</dbReference>
<dbReference type="PRINTS" id="PR00205">
    <property type="entry name" value="CADHERIN"/>
</dbReference>
<dbReference type="SMART" id="SM00112">
    <property type="entry name" value="CA"/>
    <property type="match status" value="5"/>
</dbReference>
<dbReference type="SUPFAM" id="SSF49313">
    <property type="entry name" value="Cadherin-like"/>
    <property type="match status" value="5"/>
</dbReference>
<dbReference type="PROSITE" id="PS00232">
    <property type="entry name" value="CADHERIN_1"/>
    <property type="match status" value="3"/>
</dbReference>
<dbReference type="PROSITE" id="PS50268">
    <property type="entry name" value="CADHERIN_2"/>
    <property type="match status" value="5"/>
</dbReference>